<organism>
    <name type="scientific">Hyperthermus butylicus (strain DSM 5456 / JCM 9403 / PLM1-5)</name>
    <dbReference type="NCBI Taxonomy" id="415426"/>
    <lineage>
        <taxon>Archaea</taxon>
        <taxon>Thermoproteota</taxon>
        <taxon>Thermoprotei</taxon>
        <taxon>Desulfurococcales</taxon>
        <taxon>Pyrodictiaceae</taxon>
        <taxon>Hyperthermus</taxon>
    </lineage>
</organism>
<reference key="1">
    <citation type="journal article" date="2007" name="Archaea">
        <title>The genome of Hyperthermus butylicus: a sulfur-reducing, peptide fermenting, neutrophilic Crenarchaeote growing up to 108 degrees C.</title>
        <authorList>
            <person name="Bruegger K."/>
            <person name="Chen L."/>
            <person name="Stark M."/>
            <person name="Zibat A."/>
            <person name="Redder P."/>
            <person name="Ruepp A."/>
            <person name="Awayez M."/>
            <person name="She Q."/>
            <person name="Garrett R.A."/>
            <person name="Klenk H.-P."/>
        </authorList>
    </citation>
    <scope>NUCLEOTIDE SEQUENCE [LARGE SCALE GENOMIC DNA]</scope>
    <source>
        <strain>DSM 5456 / JCM 9403 / PLM1-5</strain>
    </source>
</reference>
<comment type="catalytic activity">
    <reaction evidence="1">
        <text>sulfate + ATP + H(+) = adenosine 5'-phosphosulfate + diphosphate</text>
        <dbReference type="Rhea" id="RHEA:18133"/>
        <dbReference type="ChEBI" id="CHEBI:15378"/>
        <dbReference type="ChEBI" id="CHEBI:16189"/>
        <dbReference type="ChEBI" id="CHEBI:30616"/>
        <dbReference type="ChEBI" id="CHEBI:33019"/>
        <dbReference type="ChEBI" id="CHEBI:58243"/>
        <dbReference type="EC" id="2.7.7.4"/>
    </reaction>
</comment>
<comment type="pathway">
    <text evidence="1">Sulfur metabolism; hydrogen sulfide biosynthesis; sulfite from sulfate: step 1/3.</text>
</comment>
<comment type="similarity">
    <text evidence="1">Belongs to the sulfate adenylyltransferase family.</text>
</comment>
<evidence type="ECO:0000255" key="1">
    <source>
        <dbReference type="HAMAP-Rule" id="MF_00066"/>
    </source>
</evidence>
<sequence length="389" mass="44698">MVSRPHGGRLVDRTVSDKRRERLREEARELPAIRLTAGLAADVANIAHGVYSPLEGFMLQEDYLSVLDEMRLSNDLPWTIPIILDVDPGEIAGVREGDDIALVYNGKPIALMRVEEIYGWDRKEYAAKVFKTTDPAHPGVAKTMKRKELLIGGPIDLIEDPPEPFERYRLWPKETRVLFKARGWKTIAAFQTRNVPHLGHEYVQKAALTFTDGLFVNPLVGWKKPGDYRDEVIVEAYQALIKHYFPVESVVFSVLRMEMRYAGPREAIHHAIVRKNFGATHFIVGRDHAGVGNYYGPYEAWELFREFPDLGITPLFVREAFYCRKCGQMVNEKICPHPEEYRVRISGTKLRRMLLEGQRPPEYMMRPEVVDVVLKHPNPFIEGDEAFQE</sequence>
<proteinExistence type="inferred from homology"/>
<gene>
    <name evidence="1" type="primary">sat</name>
    <name type="ordered locus">Hbut_1499</name>
</gene>
<accession>A2BMW0</accession>
<keyword id="KW-0067">ATP-binding</keyword>
<keyword id="KW-0547">Nucleotide-binding</keyword>
<keyword id="KW-0548">Nucleotidyltransferase</keyword>
<keyword id="KW-1185">Reference proteome</keyword>
<keyword id="KW-0808">Transferase</keyword>
<protein>
    <recommendedName>
        <fullName evidence="1">Sulfate adenylyltransferase</fullName>
        <ecNumber evidence="1">2.7.7.4</ecNumber>
    </recommendedName>
    <alternativeName>
        <fullName evidence="1">ATP-sulfurylase</fullName>
    </alternativeName>
    <alternativeName>
        <fullName evidence="1">Sulfate adenylate transferase</fullName>
        <shortName evidence="1">SAT</shortName>
    </alternativeName>
</protein>
<feature type="chain" id="PRO_1000009040" description="Sulfate adenylyltransferase">
    <location>
        <begin position="1"/>
        <end position="389"/>
    </location>
</feature>
<dbReference type="EC" id="2.7.7.4" evidence="1"/>
<dbReference type="EMBL" id="CP000493">
    <property type="protein sequence ID" value="ABM81321.1"/>
    <property type="molecule type" value="Genomic_DNA"/>
</dbReference>
<dbReference type="RefSeq" id="WP_011822639.1">
    <property type="nucleotide sequence ID" value="NC_008818.1"/>
</dbReference>
<dbReference type="SMR" id="A2BMW0"/>
<dbReference type="STRING" id="415426.Hbut_1499"/>
<dbReference type="EnsemblBacteria" id="ABM81321">
    <property type="protein sequence ID" value="ABM81321"/>
    <property type="gene ID" value="Hbut_1499"/>
</dbReference>
<dbReference type="GeneID" id="4781530"/>
<dbReference type="KEGG" id="hbu:Hbut_1499"/>
<dbReference type="eggNOG" id="arCOG04191">
    <property type="taxonomic scope" value="Archaea"/>
</dbReference>
<dbReference type="HOGENOM" id="CLU_022950_1_1_2"/>
<dbReference type="OrthoDB" id="6358at2157"/>
<dbReference type="UniPathway" id="UPA00140">
    <property type="reaction ID" value="UER00204"/>
</dbReference>
<dbReference type="Proteomes" id="UP000002593">
    <property type="component" value="Chromosome"/>
</dbReference>
<dbReference type="GO" id="GO:0005524">
    <property type="term" value="F:ATP binding"/>
    <property type="evidence" value="ECO:0007669"/>
    <property type="project" value="UniProtKB-KW"/>
</dbReference>
<dbReference type="GO" id="GO:0004781">
    <property type="term" value="F:sulfate adenylyltransferase (ATP) activity"/>
    <property type="evidence" value="ECO:0007669"/>
    <property type="project" value="UniProtKB-UniRule"/>
</dbReference>
<dbReference type="GO" id="GO:0070814">
    <property type="term" value="P:hydrogen sulfide biosynthetic process"/>
    <property type="evidence" value="ECO:0007669"/>
    <property type="project" value="UniProtKB-UniRule"/>
</dbReference>
<dbReference type="GO" id="GO:0000103">
    <property type="term" value="P:sulfate assimilation"/>
    <property type="evidence" value="ECO:0007669"/>
    <property type="project" value="UniProtKB-UniRule"/>
</dbReference>
<dbReference type="CDD" id="cd00517">
    <property type="entry name" value="ATPS"/>
    <property type="match status" value="1"/>
</dbReference>
<dbReference type="Gene3D" id="3.40.50.620">
    <property type="entry name" value="HUPs"/>
    <property type="match status" value="1"/>
</dbReference>
<dbReference type="Gene3D" id="3.10.400.10">
    <property type="entry name" value="Sulfate adenylyltransferase"/>
    <property type="match status" value="1"/>
</dbReference>
<dbReference type="HAMAP" id="MF_00066">
    <property type="entry name" value="Sulf_adenylyltr"/>
    <property type="match status" value="1"/>
</dbReference>
<dbReference type="InterPro" id="IPR025980">
    <property type="entry name" value="ATP-Sase_PUA-like_dom"/>
</dbReference>
<dbReference type="InterPro" id="IPR015947">
    <property type="entry name" value="PUA-like_sf"/>
</dbReference>
<dbReference type="InterPro" id="IPR014729">
    <property type="entry name" value="Rossmann-like_a/b/a_fold"/>
</dbReference>
<dbReference type="InterPro" id="IPR020792">
    <property type="entry name" value="SO4_adenylyltransferase_pro"/>
</dbReference>
<dbReference type="InterPro" id="IPR024951">
    <property type="entry name" value="Sulfurylase_cat_dom"/>
</dbReference>
<dbReference type="InterPro" id="IPR002650">
    <property type="entry name" value="Sulphate_adenylyltransferase"/>
</dbReference>
<dbReference type="NCBIfam" id="NF003166">
    <property type="entry name" value="PRK04149.1"/>
    <property type="match status" value="1"/>
</dbReference>
<dbReference type="NCBIfam" id="TIGR00339">
    <property type="entry name" value="sopT"/>
    <property type="match status" value="1"/>
</dbReference>
<dbReference type="PANTHER" id="PTHR43509">
    <property type="match status" value="1"/>
</dbReference>
<dbReference type="PANTHER" id="PTHR43509:SF1">
    <property type="entry name" value="SULFATE ADENYLYLTRANSFERASE"/>
    <property type="match status" value="1"/>
</dbReference>
<dbReference type="Pfam" id="PF01747">
    <property type="entry name" value="ATP-sulfurylase"/>
    <property type="match status" value="1"/>
</dbReference>
<dbReference type="Pfam" id="PF14306">
    <property type="entry name" value="PUA_2"/>
    <property type="match status" value="1"/>
</dbReference>
<dbReference type="SUPFAM" id="SSF52374">
    <property type="entry name" value="Nucleotidylyl transferase"/>
    <property type="match status" value="1"/>
</dbReference>
<dbReference type="SUPFAM" id="SSF88697">
    <property type="entry name" value="PUA domain-like"/>
    <property type="match status" value="1"/>
</dbReference>
<name>SAT_HYPBU</name>